<name>Y1364_STAAS</name>
<organism>
    <name type="scientific">Staphylococcus aureus (strain MSSA476)</name>
    <dbReference type="NCBI Taxonomy" id="282459"/>
    <lineage>
        <taxon>Bacteria</taxon>
        <taxon>Bacillati</taxon>
        <taxon>Bacillota</taxon>
        <taxon>Bacilli</taxon>
        <taxon>Bacillales</taxon>
        <taxon>Staphylococcaceae</taxon>
        <taxon>Staphylococcus</taxon>
    </lineage>
</organism>
<accession>Q6G9E0</accession>
<comment type="similarity">
    <text evidence="1">Belongs to the UPF0346 family.</text>
</comment>
<sequence>MKNYSFYQFVMTVRGRHDDKGRLAEEIFDDLAFPKHDDDFNILSDYIETHGDFTLPMSVFDDLYEEYTEWLKF</sequence>
<evidence type="ECO:0000255" key="1">
    <source>
        <dbReference type="HAMAP-Rule" id="MF_01538"/>
    </source>
</evidence>
<feature type="chain" id="PRO_0000164285" description="UPF0346 protein SAS1364">
    <location>
        <begin position="1"/>
        <end position="73"/>
    </location>
</feature>
<dbReference type="EMBL" id="BX571857">
    <property type="protein sequence ID" value="CAG43140.1"/>
    <property type="molecule type" value="Genomic_DNA"/>
</dbReference>
<dbReference type="RefSeq" id="WP_000801007.1">
    <property type="nucleotide sequence ID" value="NC_002953.3"/>
</dbReference>
<dbReference type="SMR" id="Q6G9E0"/>
<dbReference type="KEGG" id="sas:SAS1364"/>
<dbReference type="HOGENOM" id="CLU_177534_1_0_9"/>
<dbReference type="Gene3D" id="1.10.150.260">
    <property type="entry name" value="YozE SAM-like"/>
    <property type="match status" value="1"/>
</dbReference>
<dbReference type="HAMAP" id="MF_01538">
    <property type="entry name" value="UPF0346"/>
    <property type="match status" value="1"/>
</dbReference>
<dbReference type="InterPro" id="IPR010673">
    <property type="entry name" value="UPF0346"/>
</dbReference>
<dbReference type="InterPro" id="IPR023089">
    <property type="entry name" value="YozE_SAM-like"/>
</dbReference>
<dbReference type="InterPro" id="IPR036806">
    <property type="entry name" value="YozE_SAM-like_sf"/>
</dbReference>
<dbReference type="NCBIfam" id="NF010193">
    <property type="entry name" value="PRK13672.1"/>
    <property type="match status" value="1"/>
</dbReference>
<dbReference type="Pfam" id="PF06855">
    <property type="entry name" value="YozE_SAM_like"/>
    <property type="match status" value="1"/>
</dbReference>
<dbReference type="PIRSF" id="PIRSF037262">
    <property type="entry name" value="UCP037262"/>
    <property type="match status" value="1"/>
</dbReference>
<dbReference type="SUPFAM" id="SSF140652">
    <property type="entry name" value="YozE-like"/>
    <property type="match status" value="1"/>
</dbReference>
<gene>
    <name type="ordered locus">SAS1364</name>
</gene>
<proteinExistence type="inferred from homology"/>
<reference key="1">
    <citation type="journal article" date="2004" name="Proc. Natl. Acad. Sci. U.S.A.">
        <title>Complete genomes of two clinical Staphylococcus aureus strains: evidence for the rapid evolution of virulence and drug resistance.</title>
        <authorList>
            <person name="Holden M.T.G."/>
            <person name="Feil E.J."/>
            <person name="Lindsay J.A."/>
            <person name="Peacock S.J."/>
            <person name="Day N.P.J."/>
            <person name="Enright M.C."/>
            <person name="Foster T.J."/>
            <person name="Moore C.E."/>
            <person name="Hurst L."/>
            <person name="Atkin R."/>
            <person name="Barron A."/>
            <person name="Bason N."/>
            <person name="Bentley S.D."/>
            <person name="Chillingworth C."/>
            <person name="Chillingworth T."/>
            <person name="Churcher C."/>
            <person name="Clark L."/>
            <person name="Corton C."/>
            <person name="Cronin A."/>
            <person name="Doggett J."/>
            <person name="Dowd L."/>
            <person name="Feltwell T."/>
            <person name="Hance Z."/>
            <person name="Harris B."/>
            <person name="Hauser H."/>
            <person name="Holroyd S."/>
            <person name="Jagels K."/>
            <person name="James K.D."/>
            <person name="Lennard N."/>
            <person name="Line A."/>
            <person name="Mayes R."/>
            <person name="Moule S."/>
            <person name="Mungall K."/>
            <person name="Ormond D."/>
            <person name="Quail M.A."/>
            <person name="Rabbinowitsch E."/>
            <person name="Rutherford K.M."/>
            <person name="Sanders M."/>
            <person name="Sharp S."/>
            <person name="Simmonds M."/>
            <person name="Stevens K."/>
            <person name="Whitehead S."/>
            <person name="Barrell B.G."/>
            <person name="Spratt B.G."/>
            <person name="Parkhill J."/>
        </authorList>
    </citation>
    <scope>NUCLEOTIDE SEQUENCE [LARGE SCALE GENOMIC DNA]</scope>
    <source>
        <strain>MSSA476</strain>
    </source>
</reference>
<protein>
    <recommendedName>
        <fullName evidence="1">UPF0346 protein SAS1364</fullName>
    </recommendedName>
</protein>